<name>RS17_NITMS</name>
<feature type="chain" id="PRO_1000143277" description="Small ribosomal subunit protein uS17">
    <location>
        <begin position="1"/>
        <end position="107"/>
    </location>
</feature>
<organism>
    <name type="scientific">Nitrosopumilus maritimus (strain SCM1)</name>
    <dbReference type="NCBI Taxonomy" id="436308"/>
    <lineage>
        <taxon>Archaea</taxon>
        <taxon>Nitrososphaerota</taxon>
        <taxon>Nitrososphaeria</taxon>
        <taxon>Nitrosopumilales</taxon>
        <taxon>Nitrosopumilaceae</taxon>
        <taxon>Nitrosopumilus</taxon>
    </lineage>
</organism>
<comment type="function">
    <text evidence="1">One of the primary rRNA binding proteins, it binds specifically to the 5'-end of 16S ribosomal RNA.</text>
</comment>
<comment type="subunit">
    <text evidence="1">Part of the 30S ribosomal subunit.</text>
</comment>
<comment type="similarity">
    <text evidence="1">Belongs to the universal ribosomal protein uS17 family.</text>
</comment>
<sequence length="107" mass="11909">MTRNIGLKVKEPKRECEDKNCPFHGELAIRGKLFDGKVTGSKAKQTITLQKDAPVYFNKFKRYARGKSSIHAHVPGCIDVESGDNVLTAECRPISKSVSYVVVEVRS</sequence>
<keyword id="KW-1185">Reference proteome</keyword>
<keyword id="KW-0687">Ribonucleoprotein</keyword>
<keyword id="KW-0689">Ribosomal protein</keyword>
<keyword id="KW-0694">RNA-binding</keyword>
<keyword id="KW-0699">rRNA-binding</keyword>
<reference key="1">
    <citation type="journal article" date="2010" name="Proc. Natl. Acad. Sci. U.S.A.">
        <title>Nitrosopumilus maritimus genome reveals unique mechanisms for nitrification and autotrophy in globally distributed marine crenarchaea.</title>
        <authorList>
            <person name="Walker C.B."/>
            <person name="de la Torre J.R."/>
            <person name="Klotz M.G."/>
            <person name="Urakawa H."/>
            <person name="Pinel N."/>
            <person name="Arp D.J."/>
            <person name="Brochier-Armanet C."/>
            <person name="Chain P.S."/>
            <person name="Chan P.P."/>
            <person name="Gollabgir A."/>
            <person name="Hemp J."/>
            <person name="Hugler M."/>
            <person name="Karr E.A."/>
            <person name="Konneke M."/>
            <person name="Shin M."/>
            <person name="Lawton T.J."/>
            <person name="Lowe T."/>
            <person name="Martens-Habbena W."/>
            <person name="Sayavedra-Soto L.A."/>
            <person name="Lang D."/>
            <person name="Sievert S.M."/>
            <person name="Rosenzweig A.C."/>
            <person name="Manning G."/>
            <person name="Stahl D.A."/>
        </authorList>
    </citation>
    <scope>NUCLEOTIDE SEQUENCE [LARGE SCALE GENOMIC DNA]</scope>
    <source>
        <strain>SCM1</strain>
    </source>
</reference>
<dbReference type="EMBL" id="CP000866">
    <property type="protein sequence ID" value="ABX12697.1"/>
    <property type="molecule type" value="Genomic_DNA"/>
</dbReference>
<dbReference type="RefSeq" id="WP_012215184.1">
    <property type="nucleotide sequence ID" value="NC_010085.1"/>
</dbReference>
<dbReference type="SMR" id="A9A5I6"/>
<dbReference type="FunCoup" id="A9A5I6">
    <property type="interactions" value="171"/>
</dbReference>
<dbReference type="STRING" id="436308.Nmar_0801"/>
<dbReference type="EnsemblBacteria" id="ABX12697">
    <property type="protein sequence ID" value="ABX12697"/>
    <property type="gene ID" value="Nmar_0801"/>
</dbReference>
<dbReference type="GeneID" id="5773797"/>
<dbReference type="KEGG" id="nmr:Nmar_0801"/>
<dbReference type="eggNOG" id="arCOG04096">
    <property type="taxonomic scope" value="Archaea"/>
</dbReference>
<dbReference type="HOGENOM" id="CLU_073626_0_3_2"/>
<dbReference type="InParanoid" id="A9A5I6"/>
<dbReference type="OrthoDB" id="10698at2157"/>
<dbReference type="PhylomeDB" id="A9A5I6"/>
<dbReference type="Proteomes" id="UP000000792">
    <property type="component" value="Chromosome"/>
</dbReference>
<dbReference type="GO" id="GO:0022627">
    <property type="term" value="C:cytosolic small ribosomal subunit"/>
    <property type="evidence" value="ECO:0000318"/>
    <property type="project" value="GO_Central"/>
</dbReference>
<dbReference type="GO" id="GO:0019843">
    <property type="term" value="F:rRNA binding"/>
    <property type="evidence" value="ECO:0007669"/>
    <property type="project" value="UniProtKB-UniRule"/>
</dbReference>
<dbReference type="GO" id="GO:0003735">
    <property type="term" value="F:structural constituent of ribosome"/>
    <property type="evidence" value="ECO:0000318"/>
    <property type="project" value="GO_Central"/>
</dbReference>
<dbReference type="GO" id="GO:0006412">
    <property type="term" value="P:translation"/>
    <property type="evidence" value="ECO:0007669"/>
    <property type="project" value="UniProtKB-UniRule"/>
</dbReference>
<dbReference type="CDD" id="cd00364">
    <property type="entry name" value="Ribosomal_uS17"/>
    <property type="match status" value="1"/>
</dbReference>
<dbReference type="Gene3D" id="2.40.50.1000">
    <property type="match status" value="1"/>
</dbReference>
<dbReference type="HAMAP" id="MF_01345_A">
    <property type="entry name" value="Ribosomal_uS17_A"/>
    <property type="match status" value="1"/>
</dbReference>
<dbReference type="InterPro" id="IPR012340">
    <property type="entry name" value="NA-bd_OB-fold"/>
</dbReference>
<dbReference type="InterPro" id="IPR000266">
    <property type="entry name" value="Ribosomal_uS17"/>
</dbReference>
<dbReference type="InterPro" id="IPR028333">
    <property type="entry name" value="Ribosomal_uS17_arc/euk"/>
</dbReference>
<dbReference type="InterPro" id="IPR019978">
    <property type="entry name" value="Ribosomal_uS17_archaeal"/>
</dbReference>
<dbReference type="NCBIfam" id="NF006345">
    <property type="entry name" value="PRK08572.1"/>
    <property type="match status" value="1"/>
</dbReference>
<dbReference type="NCBIfam" id="TIGR03630">
    <property type="entry name" value="uS17_arch"/>
    <property type="match status" value="1"/>
</dbReference>
<dbReference type="PANTHER" id="PTHR10744">
    <property type="entry name" value="40S RIBOSOMAL PROTEIN S11 FAMILY MEMBER"/>
    <property type="match status" value="1"/>
</dbReference>
<dbReference type="PANTHER" id="PTHR10744:SF9">
    <property type="entry name" value="40S RIBOSOMAL PROTEIN S11-RELATED"/>
    <property type="match status" value="1"/>
</dbReference>
<dbReference type="Pfam" id="PF00366">
    <property type="entry name" value="Ribosomal_S17"/>
    <property type="match status" value="1"/>
</dbReference>
<dbReference type="PRINTS" id="PR00973">
    <property type="entry name" value="RIBOSOMALS17"/>
</dbReference>
<dbReference type="SUPFAM" id="SSF50249">
    <property type="entry name" value="Nucleic acid-binding proteins"/>
    <property type="match status" value="1"/>
</dbReference>
<proteinExistence type="inferred from homology"/>
<evidence type="ECO:0000255" key="1">
    <source>
        <dbReference type="HAMAP-Rule" id="MF_01345"/>
    </source>
</evidence>
<evidence type="ECO:0000305" key="2"/>
<protein>
    <recommendedName>
        <fullName evidence="1">Small ribosomal subunit protein uS17</fullName>
    </recommendedName>
    <alternativeName>
        <fullName evidence="2">30S ribosomal protein S17</fullName>
    </alternativeName>
</protein>
<accession>A9A5I6</accession>
<gene>
    <name evidence="1" type="primary">rps17</name>
    <name type="ordered locus">Nmar_0801</name>
</gene>